<protein>
    <recommendedName>
        <fullName>Fibroblast growth factor 2</fullName>
        <shortName>FGF-2</shortName>
    </recommendedName>
    <alternativeName>
        <fullName>Basic fibroblast growth factor</fullName>
        <shortName>bFGF</shortName>
    </alternativeName>
    <alternativeName>
        <fullName>Heparin-binding growth factor 2</fullName>
        <shortName>HBGF-2</shortName>
    </alternativeName>
</protein>
<keyword id="KW-0037">Angiogenesis</keyword>
<keyword id="KW-0217">Developmental protein</keyword>
<keyword id="KW-0221">Differentiation</keyword>
<keyword id="KW-0339">Growth factor</keyword>
<keyword id="KW-0358">Heparin-binding</keyword>
<keyword id="KW-1017">Isopeptide bond</keyword>
<keyword id="KW-0497">Mitogen</keyword>
<keyword id="KW-0539">Nucleus</keyword>
<keyword id="KW-0597">Phosphoprotein</keyword>
<keyword id="KW-1185">Reference proteome</keyword>
<keyword id="KW-0964">Secreted</keyword>
<keyword id="KW-0832">Ubl conjugation</keyword>
<gene>
    <name type="primary">FGF2</name>
</gene>
<accession>P48798</accession>
<reference key="1">
    <citation type="journal article" date="1994" name="DNA Cell Biol.">
        <title>Characterization of cDNA encoding basic fibroblast growth factor of the marsupial Monodelphis domestica.</title>
        <authorList>
            <person name="Kusewitt D.F."/>
            <person name="Sabourin C.L.K."/>
            <person name="Sherburn T.E."/>
            <person name="Ley R.D."/>
        </authorList>
    </citation>
    <scope>NUCLEOTIDE SEQUENCE [MRNA]</scope>
    <source>
        <tissue>Eye</tissue>
    </source>
</reference>
<comment type="function">
    <text evidence="2">Acts as a ligand for FGFR1, FGFR2, FGFR3 and FGFR4 (By similarity). Also acts as an integrin ligand which is required for FGF2 signaling (By similarity). Binds to integrin ITGAV:ITGB3 (By similarity). Plays an important role in the regulation of cell survival, cell division, cell differentiation and cell migration (By similarity). Functions as a potent mitogen in vitro. Can induce angiogenesis (By similarity). Mediates phosphorylation of ERK1/2 and thereby promotes retinal lens fiber differentiation (By similarity).</text>
</comment>
<comment type="subunit">
    <text evidence="2 3 4">Monomer. Homodimer. Interacts with FGFR1, FGFR2, FGFR3 and FGFR4. Affinity between fibroblast growth factors (FGFs) and their receptors is increased by heparan sulfate glycosaminoglycans that function as coreceptors. Interacts with CSPG4, FGFBP1 and TEC. Found in a complex with FGFBP1, FGF1 and FGF2. Interacts with FGFBP3. Interacts with integrin ITGAV:ITGB3; the interaction is required for FGF2 signaling. Interacts with SNORC (via the extracellular domain). Interacts with glypican GPC3.</text>
</comment>
<comment type="subcellular location">
    <subcellularLocation>
        <location evidence="2">Secreted</location>
    </subcellularLocation>
    <subcellularLocation>
        <location evidence="2">Nucleus</location>
    </subcellularLocation>
    <text evidence="2">Exported from cells by an endoplasmic reticulum (ER)/Golgi-independent mechanism (By similarity). Unconventional secretion of FGF2 occurs by direct translocation across the plasma membrane (By similarity). Binding of exogenous FGF2 to FGFR facilitates endocytosis followed by translocation of FGF2 across endosomal membrane into the cytosol (By similarity). Nuclear import from the cytosol requires the classical nuclear import machinery, involving proteins KPNA1 and KPNB1, as well as CEP57 (By similarity).</text>
</comment>
<comment type="PTM">
    <text evidence="1">Phosphorylation at Tyr-83 regulates FGF2 unconventional secretion.</text>
</comment>
<comment type="similarity">
    <text evidence="5">Belongs to the heparin-binding growth factors family.</text>
</comment>
<comment type="sequence caution" evidence="5">
    <conflict type="erroneous initiation">
        <sequence resource="EMBL-CDS" id="CAA78854"/>
    </conflict>
    <text>Extended N-terminus.</text>
</comment>
<dbReference type="EMBL" id="Z15154">
    <property type="protein sequence ID" value="CAA78854.1"/>
    <property type="status" value="ALT_INIT"/>
    <property type="molecule type" value="mRNA"/>
</dbReference>
<dbReference type="RefSeq" id="NP_001029148.1">
    <property type="nucleotide sequence ID" value="NM_001033976.2"/>
</dbReference>
<dbReference type="SMR" id="P48798"/>
<dbReference type="FunCoup" id="P48798">
    <property type="interactions" value="154"/>
</dbReference>
<dbReference type="STRING" id="13616.ENSMODP00000023577"/>
<dbReference type="Ensembl" id="ENSMODT00000023996.4">
    <property type="protein sequence ID" value="ENSMODP00000023577.3"/>
    <property type="gene ID" value="ENSMODG00000018899.4"/>
</dbReference>
<dbReference type="GeneID" id="619384"/>
<dbReference type="KEGG" id="mdo:619384"/>
<dbReference type="CTD" id="2247"/>
<dbReference type="eggNOG" id="KOG3885">
    <property type="taxonomic scope" value="Eukaryota"/>
</dbReference>
<dbReference type="GeneTree" id="ENSGT00940000161583"/>
<dbReference type="HOGENOM" id="CLU_081609_5_1_1"/>
<dbReference type="InParanoid" id="P48798"/>
<dbReference type="OMA" id="KGVCSNR"/>
<dbReference type="OrthoDB" id="5987799at2759"/>
<dbReference type="TreeFam" id="TF317805"/>
<dbReference type="Proteomes" id="UP000002280">
    <property type="component" value="Chromosome 5"/>
</dbReference>
<dbReference type="Bgee" id="ENSMODG00000018899">
    <property type="expression patterns" value="Expressed in skeletal muscle tissue and 19 other cell types or tissues"/>
</dbReference>
<dbReference type="GO" id="GO:0005737">
    <property type="term" value="C:cytoplasm"/>
    <property type="evidence" value="ECO:0000318"/>
    <property type="project" value="GO_Central"/>
</dbReference>
<dbReference type="GO" id="GO:0005615">
    <property type="term" value="C:extracellular space"/>
    <property type="evidence" value="ECO:0000318"/>
    <property type="project" value="GO_Central"/>
</dbReference>
<dbReference type="GO" id="GO:0005634">
    <property type="term" value="C:nucleus"/>
    <property type="evidence" value="ECO:0000318"/>
    <property type="project" value="GO_Central"/>
</dbReference>
<dbReference type="GO" id="GO:0042056">
    <property type="term" value="F:chemoattractant activity"/>
    <property type="evidence" value="ECO:0007669"/>
    <property type="project" value="Ensembl"/>
</dbReference>
<dbReference type="GO" id="GO:0019956">
    <property type="term" value="F:chemokine binding"/>
    <property type="evidence" value="ECO:0007669"/>
    <property type="project" value="Ensembl"/>
</dbReference>
<dbReference type="GO" id="GO:0005125">
    <property type="term" value="F:cytokine activity"/>
    <property type="evidence" value="ECO:0007669"/>
    <property type="project" value="Ensembl"/>
</dbReference>
<dbReference type="GO" id="GO:0005104">
    <property type="term" value="F:fibroblast growth factor receptor binding"/>
    <property type="evidence" value="ECO:0000318"/>
    <property type="project" value="GO_Central"/>
</dbReference>
<dbReference type="GO" id="GO:0008083">
    <property type="term" value="F:growth factor activity"/>
    <property type="evidence" value="ECO:0000318"/>
    <property type="project" value="GO_Central"/>
</dbReference>
<dbReference type="GO" id="GO:0008201">
    <property type="term" value="F:heparin binding"/>
    <property type="evidence" value="ECO:0007669"/>
    <property type="project" value="UniProtKB-KW"/>
</dbReference>
<dbReference type="GO" id="GO:0042802">
    <property type="term" value="F:identical protein binding"/>
    <property type="evidence" value="ECO:0007669"/>
    <property type="project" value="Ensembl"/>
</dbReference>
<dbReference type="GO" id="GO:0005178">
    <property type="term" value="F:integrin binding"/>
    <property type="evidence" value="ECO:0000250"/>
    <property type="project" value="UniProtKB"/>
</dbReference>
<dbReference type="GO" id="GO:0090722">
    <property type="term" value="F:receptor-receptor interaction"/>
    <property type="evidence" value="ECO:0007669"/>
    <property type="project" value="Ensembl"/>
</dbReference>
<dbReference type="GO" id="GO:0001658">
    <property type="term" value="P:branching involved in ureteric bud morphogenesis"/>
    <property type="evidence" value="ECO:0000250"/>
    <property type="project" value="UniProtKB"/>
</dbReference>
<dbReference type="GO" id="GO:0060070">
    <property type="term" value="P:canonical Wnt signaling pathway"/>
    <property type="evidence" value="ECO:0007669"/>
    <property type="project" value="Ensembl"/>
</dbReference>
<dbReference type="GO" id="GO:0002042">
    <property type="term" value="P:cell migration involved in sprouting angiogenesis"/>
    <property type="evidence" value="ECO:0007669"/>
    <property type="project" value="Ensembl"/>
</dbReference>
<dbReference type="GO" id="GO:0021930">
    <property type="term" value="P:cerebellar granule cell precursor proliferation"/>
    <property type="evidence" value="ECO:0007669"/>
    <property type="project" value="Ensembl"/>
</dbReference>
<dbReference type="GO" id="GO:0060591">
    <property type="term" value="P:chondroblast differentiation"/>
    <property type="evidence" value="ECO:0007669"/>
    <property type="project" value="Ensembl"/>
</dbReference>
<dbReference type="GO" id="GO:0060128">
    <property type="term" value="P:corticotropin hormone secreting cell differentiation"/>
    <property type="evidence" value="ECO:0007669"/>
    <property type="project" value="Ensembl"/>
</dbReference>
<dbReference type="GO" id="GO:0001935">
    <property type="term" value="P:endothelial cell proliferation"/>
    <property type="evidence" value="ECO:0007669"/>
    <property type="project" value="Ensembl"/>
</dbReference>
<dbReference type="GO" id="GO:0070371">
    <property type="term" value="P:ERK1 and ERK2 cascade"/>
    <property type="evidence" value="ECO:0007669"/>
    <property type="project" value="Ensembl"/>
</dbReference>
<dbReference type="GO" id="GO:0008543">
    <property type="term" value="P:fibroblast growth factor receptor signaling pathway"/>
    <property type="evidence" value="ECO:0000318"/>
    <property type="project" value="GO_Central"/>
</dbReference>
<dbReference type="GO" id="GO:0010001">
    <property type="term" value="P:glial cell differentiation"/>
    <property type="evidence" value="ECO:0007669"/>
    <property type="project" value="Ensembl"/>
</dbReference>
<dbReference type="GO" id="GO:0014843">
    <property type="term" value="P:growth factor dependent regulation of skeletal muscle satellite cell proliferation"/>
    <property type="evidence" value="ECO:0007669"/>
    <property type="project" value="Ensembl"/>
</dbReference>
<dbReference type="GO" id="GO:0030214">
    <property type="term" value="P:hyaluronan catabolic process"/>
    <property type="evidence" value="ECO:0007669"/>
    <property type="project" value="Ensembl"/>
</dbReference>
<dbReference type="GO" id="GO:0042491">
    <property type="term" value="P:inner ear auditory receptor cell differentiation"/>
    <property type="evidence" value="ECO:0007669"/>
    <property type="project" value="Ensembl"/>
</dbReference>
<dbReference type="GO" id="GO:0030324">
    <property type="term" value="P:lung development"/>
    <property type="evidence" value="ECO:0007669"/>
    <property type="project" value="Ensembl"/>
</dbReference>
<dbReference type="GO" id="GO:1904977">
    <property type="term" value="P:lymphatic endothelial cell migration"/>
    <property type="evidence" value="ECO:0007669"/>
    <property type="project" value="Ensembl"/>
</dbReference>
<dbReference type="GO" id="GO:0060644">
    <property type="term" value="P:mammary gland epithelial cell differentiation"/>
    <property type="evidence" value="ECO:0007669"/>
    <property type="project" value="Ensembl"/>
</dbReference>
<dbReference type="GO" id="GO:0043537">
    <property type="term" value="P:negative regulation of blood vessel endothelial cell migration"/>
    <property type="evidence" value="ECO:0007669"/>
    <property type="project" value="Ensembl"/>
</dbReference>
<dbReference type="GO" id="GO:0010764">
    <property type="term" value="P:negative regulation of fibroblast migration"/>
    <property type="evidence" value="ECO:0007669"/>
    <property type="project" value="Ensembl"/>
</dbReference>
<dbReference type="GO" id="GO:2000647">
    <property type="term" value="P:negative regulation of stem cell proliferation"/>
    <property type="evidence" value="ECO:0007669"/>
    <property type="project" value="Ensembl"/>
</dbReference>
<dbReference type="GO" id="GO:0061045">
    <property type="term" value="P:negative regulation of wound healing"/>
    <property type="evidence" value="ECO:0007669"/>
    <property type="project" value="Ensembl"/>
</dbReference>
<dbReference type="GO" id="GO:0007405">
    <property type="term" value="P:neuroblast proliferation"/>
    <property type="evidence" value="ECO:0007669"/>
    <property type="project" value="Ensembl"/>
</dbReference>
<dbReference type="GO" id="GO:0022008">
    <property type="term" value="P:neurogenesis"/>
    <property type="evidence" value="ECO:0000318"/>
    <property type="project" value="GO_Central"/>
</dbReference>
<dbReference type="GO" id="GO:0001759">
    <property type="term" value="P:organ induction"/>
    <property type="evidence" value="ECO:0007669"/>
    <property type="project" value="Ensembl"/>
</dbReference>
<dbReference type="GO" id="GO:0001649">
    <property type="term" value="P:osteoblast differentiation"/>
    <property type="evidence" value="ECO:0007669"/>
    <property type="project" value="Ensembl"/>
</dbReference>
<dbReference type="GO" id="GO:0043491">
    <property type="term" value="P:phosphatidylinositol 3-kinase/protein kinase B signal transduction"/>
    <property type="evidence" value="ECO:0007669"/>
    <property type="project" value="Ensembl"/>
</dbReference>
<dbReference type="GO" id="GO:0045766">
    <property type="term" value="P:positive regulation of angiogenesis"/>
    <property type="evidence" value="ECO:0000250"/>
    <property type="project" value="UniProtKB"/>
</dbReference>
<dbReference type="GO" id="GO:1905555">
    <property type="term" value="P:positive regulation of blood vessel branching"/>
    <property type="evidence" value="ECO:0007669"/>
    <property type="project" value="Ensembl"/>
</dbReference>
<dbReference type="GO" id="GO:0043536">
    <property type="term" value="P:positive regulation of blood vessel endothelial cell migration"/>
    <property type="evidence" value="ECO:0000250"/>
    <property type="project" value="UniProtKB"/>
</dbReference>
<dbReference type="GO" id="GO:0090263">
    <property type="term" value="P:positive regulation of canonical Wnt signaling pathway"/>
    <property type="evidence" value="ECO:0007669"/>
    <property type="project" value="Ensembl"/>
</dbReference>
<dbReference type="GO" id="GO:0060045">
    <property type="term" value="P:positive regulation of cardiac muscle cell proliferation"/>
    <property type="evidence" value="ECO:0007669"/>
    <property type="project" value="Ensembl"/>
</dbReference>
<dbReference type="GO" id="GO:0051781">
    <property type="term" value="P:positive regulation of cell division"/>
    <property type="evidence" value="ECO:0007669"/>
    <property type="project" value="UniProtKB-KW"/>
</dbReference>
<dbReference type="GO" id="GO:0042660">
    <property type="term" value="P:positive regulation of cell fate specification"/>
    <property type="evidence" value="ECO:0007669"/>
    <property type="project" value="Ensembl"/>
</dbReference>
<dbReference type="GO" id="GO:0090050">
    <property type="term" value="P:positive regulation of cell migration involved in sprouting angiogenesis"/>
    <property type="evidence" value="ECO:0000250"/>
    <property type="project" value="UniProtKB"/>
</dbReference>
<dbReference type="GO" id="GO:0008284">
    <property type="term" value="P:positive regulation of cell population proliferation"/>
    <property type="evidence" value="ECO:0000318"/>
    <property type="project" value="GO_Central"/>
</dbReference>
<dbReference type="GO" id="GO:0021940">
    <property type="term" value="P:positive regulation of cerebellar granule cell precursor proliferation"/>
    <property type="evidence" value="ECO:0007669"/>
    <property type="project" value="Ensembl"/>
</dbReference>
<dbReference type="GO" id="GO:2000573">
    <property type="term" value="P:positive regulation of DNA biosynthetic process"/>
    <property type="evidence" value="ECO:0007669"/>
    <property type="project" value="Ensembl"/>
</dbReference>
<dbReference type="GO" id="GO:2000546">
    <property type="term" value="P:positive regulation of endothelial cell chemotaxis to fibroblast growth factor"/>
    <property type="evidence" value="ECO:0007669"/>
    <property type="project" value="Ensembl"/>
</dbReference>
<dbReference type="GO" id="GO:1905278">
    <property type="term" value="P:positive regulation of epithelial tube formation"/>
    <property type="evidence" value="ECO:0007669"/>
    <property type="project" value="Ensembl"/>
</dbReference>
<dbReference type="GO" id="GO:0070374">
    <property type="term" value="P:positive regulation of ERK1 and ERK2 cascade"/>
    <property type="evidence" value="ECO:0000250"/>
    <property type="project" value="UniProtKB"/>
</dbReference>
<dbReference type="GO" id="GO:0010628">
    <property type="term" value="P:positive regulation of gene expression"/>
    <property type="evidence" value="ECO:0007669"/>
    <property type="project" value="Ensembl"/>
</dbReference>
<dbReference type="GO" id="GO:0045609">
    <property type="term" value="P:positive regulation of inner ear auditory receptor cell differentiation"/>
    <property type="evidence" value="ECO:0007669"/>
    <property type="project" value="Ensembl"/>
</dbReference>
<dbReference type="GO" id="GO:1902748">
    <property type="term" value="P:positive regulation of lens fiber cell differentiation"/>
    <property type="evidence" value="ECO:0000250"/>
    <property type="project" value="UniProtKB"/>
</dbReference>
<dbReference type="GO" id="GO:0043410">
    <property type="term" value="P:positive regulation of MAPK cascade"/>
    <property type="evidence" value="ECO:0000318"/>
    <property type="project" value="GO_Central"/>
</dbReference>
<dbReference type="GO" id="GO:0002052">
    <property type="term" value="P:positive regulation of neuroblast proliferation"/>
    <property type="evidence" value="ECO:0007669"/>
    <property type="project" value="Ensembl"/>
</dbReference>
<dbReference type="GO" id="GO:1902913">
    <property type="term" value="P:positive regulation of neuroepithelial cell differentiation"/>
    <property type="evidence" value="ECO:0007669"/>
    <property type="project" value="Ensembl"/>
</dbReference>
<dbReference type="GO" id="GO:0045669">
    <property type="term" value="P:positive regulation of osteoblast differentiation"/>
    <property type="evidence" value="ECO:0007669"/>
    <property type="project" value="Ensembl"/>
</dbReference>
<dbReference type="GO" id="GO:0051897">
    <property type="term" value="P:positive regulation of phosphatidylinositol 3-kinase/protein kinase B signal transduction"/>
    <property type="evidence" value="ECO:0007669"/>
    <property type="project" value="Ensembl"/>
</dbReference>
<dbReference type="GO" id="GO:0001934">
    <property type="term" value="P:positive regulation of protein phosphorylation"/>
    <property type="evidence" value="ECO:0000250"/>
    <property type="project" value="UniProtKB"/>
</dbReference>
<dbReference type="GO" id="GO:1903672">
    <property type="term" value="P:positive regulation of sprouting angiogenesis"/>
    <property type="evidence" value="ECO:0000250"/>
    <property type="project" value="UniProtKB"/>
</dbReference>
<dbReference type="GO" id="GO:2000738">
    <property type="term" value="P:positive regulation of stem cell differentiation"/>
    <property type="evidence" value="ECO:0007669"/>
    <property type="project" value="Ensembl"/>
</dbReference>
<dbReference type="GO" id="GO:2000648">
    <property type="term" value="P:positive regulation of stem cell proliferation"/>
    <property type="evidence" value="ECO:0007669"/>
    <property type="project" value="Ensembl"/>
</dbReference>
<dbReference type="GO" id="GO:0045944">
    <property type="term" value="P:positive regulation of transcription by RNA polymerase II"/>
    <property type="evidence" value="ECO:0007669"/>
    <property type="project" value="Ensembl"/>
</dbReference>
<dbReference type="GO" id="GO:1904707">
    <property type="term" value="P:positive regulation of vascular associated smooth muscle cell proliferation"/>
    <property type="evidence" value="ECO:0007669"/>
    <property type="project" value="Ensembl"/>
</dbReference>
<dbReference type="GO" id="GO:1905564">
    <property type="term" value="P:positive regulation of vascular endothelial cell proliferation"/>
    <property type="evidence" value="ECO:0007669"/>
    <property type="project" value="Ensembl"/>
</dbReference>
<dbReference type="GO" id="GO:0051726">
    <property type="term" value="P:regulation of cell cycle"/>
    <property type="evidence" value="ECO:0007669"/>
    <property type="project" value="Ensembl"/>
</dbReference>
<dbReference type="GO" id="GO:0030334">
    <property type="term" value="P:regulation of cell migration"/>
    <property type="evidence" value="ECO:0000318"/>
    <property type="project" value="GO_Central"/>
</dbReference>
<dbReference type="GO" id="GO:0046668">
    <property type="term" value="P:regulation of retinal cell programmed cell death"/>
    <property type="evidence" value="ECO:0007669"/>
    <property type="project" value="Ensembl"/>
</dbReference>
<dbReference type="GO" id="GO:0051209">
    <property type="term" value="P:release of sequestered calcium ion into cytosol"/>
    <property type="evidence" value="ECO:0007669"/>
    <property type="project" value="Ensembl"/>
</dbReference>
<dbReference type="GO" id="GO:0048678">
    <property type="term" value="P:response to axon injury"/>
    <property type="evidence" value="ECO:0007669"/>
    <property type="project" value="Ensembl"/>
</dbReference>
<dbReference type="GO" id="GO:0048864">
    <property type="term" value="P:stem cell development"/>
    <property type="evidence" value="ECO:0007669"/>
    <property type="project" value="Ensembl"/>
</dbReference>
<dbReference type="GO" id="GO:0072089">
    <property type="term" value="P:stem cell proliferation"/>
    <property type="evidence" value="ECO:0007669"/>
    <property type="project" value="Ensembl"/>
</dbReference>
<dbReference type="GO" id="GO:0021762">
    <property type="term" value="P:substantia nigra development"/>
    <property type="evidence" value="ECO:0007669"/>
    <property type="project" value="Ensembl"/>
</dbReference>
<dbReference type="GO" id="GO:0060129">
    <property type="term" value="P:thyroid-stimulating hormone-secreting cell differentiation"/>
    <property type="evidence" value="ECO:0007669"/>
    <property type="project" value="Ensembl"/>
</dbReference>
<dbReference type="GO" id="GO:0006366">
    <property type="term" value="P:transcription by RNA polymerase II"/>
    <property type="evidence" value="ECO:0007669"/>
    <property type="project" value="Ensembl"/>
</dbReference>
<dbReference type="GO" id="GO:0042060">
    <property type="term" value="P:wound healing"/>
    <property type="evidence" value="ECO:0007669"/>
    <property type="project" value="Ensembl"/>
</dbReference>
<dbReference type="CDD" id="cd23314">
    <property type="entry name" value="beta-trefoil_FGF2"/>
    <property type="match status" value="1"/>
</dbReference>
<dbReference type="FunFam" id="2.80.10.50:FF:000020">
    <property type="entry name" value="Fibroblast growth factor 1"/>
    <property type="match status" value="1"/>
</dbReference>
<dbReference type="Gene3D" id="2.80.10.50">
    <property type="match status" value="1"/>
</dbReference>
<dbReference type="InterPro" id="IPR002209">
    <property type="entry name" value="Fibroblast_GF_fam"/>
</dbReference>
<dbReference type="InterPro" id="IPR008996">
    <property type="entry name" value="IL1/FGF"/>
</dbReference>
<dbReference type="PANTHER" id="PTHR11486">
    <property type="entry name" value="FIBROBLAST GROWTH FACTOR"/>
    <property type="match status" value="1"/>
</dbReference>
<dbReference type="Pfam" id="PF00167">
    <property type="entry name" value="FGF"/>
    <property type="match status" value="1"/>
</dbReference>
<dbReference type="PRINTS" id="PR00263">
    <property type="entry name" value="HBGFFGF"/>
</dbReference>
<dbReference type="PRINTS" id="PR00262">
    <property type="entry name" value="IL1HBGF"/>
</dbReference>
<dbReference type="SMART" id="SM00442">
    <property type="entry name" value="FGF"/>
    <property type="match status" value="1"/>
</dbReference>
<dbReference type="SUPFAM" id="SSF50353">
    <property type="entry name" value="Cytokine"/>
    <property type="match status" value="1"/>
</dbReference>
<dbReference type="PROSITE" id="PS00247">
    <property type="entry name" value="HBGF_FGF"/>
    <property type="match status" value="1"/>
</dbReference>
<evidence type="ECO:0000250" key="1"/>
<evidence type="ECO:0000250" key="2">
    <source>
        <dbReference type="UniProtKB" id="P09038"/>
    </source>
</evidence>
<evidence type="ECO:0000250" key="3">
    <source>
        <dbReference type="UniProtKB" id="P13109"/>
    </source>
</evidence>
<evidence type="ECO:0000250" key="4">
    <source>
        <dbReference type="UniProtKB" id="P15655"/>
    </source>
</evidence>
<evidence type="ECO:0000305" key="5"/>
<feature type="propeptide" id="PRO_0000008934" evidence="1">
    <location>
        <begin position="1"/>
        <end position="9"/>
    </location>
</feature>
<feature type="chain" id="PRO_0000008935" description="Fibroblast growth factor 2">
    <location>
        <begin position="10"/>
        <end position="156"/>
    </location>
</feature>
<feature type="region of interest" description="Heparin-binding" evidence="1">
    <location>
        <begin position="129"/>
        <end position="145"/>
    </location>
</feature>
<feature type="binding site" evidence="1">
    <location>
        <position position="37"/>
    </location>
    <ligand>
        <name>heparin</name>
        <dbReference type="ChEBI" id="CHEBI:28304"/>
    </ligand>
</feature>
<feature type="site" description="Important for interaction with integrin" evidence="2">
    <location>
        <position position="129"/>
    </location>
</feature>
<feature type="site" description="Important for interaction with integrin" evidence="2">
    <location>
        <position position="130"/>
    </location>
</feature>
<feature type="site" description="Important for interaction with integrin" evidence="2">
    <location>
        <position position="135"/>
    </location>
</feature>
<feature type="modified residue" description="Phosphotyrosine; by TEC" evidence="2">
    <location>
        <position position="83"/>
    </location>
</feature>
<feature type="cross-link" description="Glycyl lysine isopeptide (Lys-Gly) (interchain with G-Cter in SUMO1)" evidence="2">
    <location>
        <position position="96"/>
    </location>
</feature>
<sequence>MAAGSITTLPALSGDGGGGGAFPPGHFKDPKRLYCKNGGFFLRIHPDGRVDGIREKSDPNIKLQLQAEERGVVSIKGVCANRYLAMKEDGRLLALKYVTEECFFFERLESNNYNTYRSRKYSNWYVALKRTGQYKLGSKTGPGQKAILFLPMSAKS</sequence>
<name>FGF2_MONDO</name>
<proteinExistence type="evidence at transcript level"/>
<organism>
    <name type="scientific">Monodelphis domestica</name>
    <name type="common">Gray short-tailed opossum</name>
    <dbReference type="NCBI Taxonomy" id="13616"/>
    <lineage>
        <taxon>Eukaryota</taxon>
        <taxon>Metazoa</taxon>
        <taxon>Chordata</taxon>
        <taxon>Craniata</taxon>
        <taxon>Vertebrata</taxon>
        <taxon>Euteleostomi</taxon>
        <taxon>Mammalia</taxon>
        <taxon>Metatheria</taxon>
        <taxon>Didelphimorphia</taxon>
        <taxon>Didelphidae</taxon>
        <taxon>Monodelphis</taxon>
    </lineage>
</organism>